<accession>Q5R027</accession>
<sequence length="103" mass="11561">MYAVFQSGGKQHRVSEGQIVRLEKLEAATGDVVEFDQVLMVSDGNDVNIGAPFVSGGKVKAEVIDHGRGDKIKIVKFRRRKHSRRQQGHRQWFTEVKITGINS</sequence>
<gene>
    <name evidence="1" type="primary">rplU</name>
    <name type="ordered locus">IL0475</name>
</gene>
<reference key="1">
    <citation type="journal article" date="2004" name="Proc. Natl. Acad. Sci. U.S.A.">
        <title>Genome sequence of the deep-sea gamma-proteobacterium Idiomarina loihiensis reveals amino acid fermentation as a source of carbon and energy.</title>
        <authorList>
            <person name="Hou S."/>
            <person name="Saw J.H."/>
            <person name="Lee K.S."/>
            <person name="Freitas T.A."/>
            <person name="Belisle C."/>
            <person name="Kawarabayasi Y."/>
            <person name="Donachie S.P."/>
            <person name="Pikina A."/>
            <person name="Galperin M.Y."/>
            <person name="Koonin E.V."/>
            <person name="Makarova K.S."/>
            <person name="Omelchenko M.V."/>
            <person name="Sorokin A."/>
            <person name="Wolf Y.I."/>
            <person name="Li Q.X."/>
            <person name="Keum Y.S."/>
            <person name="Campbell S."/>
            <person name="Denery J."/>
            <person name="Aizawa S."/>
            <person name="Shibata S."/>
            <person name="Malahoff A."/>
            <person name="Alam M."/>
        </authorList>
    </citation>
    <scope>NUCLEOTIDE SEQUENCE [LARGE SCALE GENOMIC DNA]</scope>
    <source>
        <strain>ATCC BAA-735 / DSM 15497 / L2-TR</strain>
    </source>
</reference>
<proteinExistence type="inferred from homology"/>
<feature type="chain" id="PRO_0000269327" description="Large ribosomal subunit protein bL21">
    <location>
        <begin position="1"/>
        <end position="103"/>
    </location>
</feature>
<dbReference type="EMBL" id="AE017340">
    <property type="protein sequence ID" value="AAV81318.1"/>
    <property type="molecule type" value="Genomic_DNA"/>
</dbReference>
<dbReference type="RefSeq" id="WP_011233736.1">
    <property type="nucleotide sequence ID" value="NC_006512.1"/>
</dbReference>
<dbReference type="SMR" id="Q5R027"/>
<dbReference type="STRING" id="283942.IL0475"/>
<dbReference type="GeneID" id="78251270"/>
<dbReference type="KEGG" id="ilo:IL0475"/>
<dbReference type="eggNOG" id="COG0261">
    <property type="taxonomic scope" value="Bacteria"/>
</dbReference>
<dbReference type="HOGENOM" id="CLU_061463_3_3_6"/>
<dbReference type="OrthoDB" id="9813334at2"/>
<dbReference type="Proteomes" id="UP000001171">
    <property type="component" value="Chromosome"/>
</dbReference>
<dbReference type="GO" id="GO:0005737">
    <property type="term" value="C:cytoplasm"/>
    <property type="evidence" value="ECO:0007669"/>
    <property type="project" value="UniProtKB-ARBA"/>
</dbReference>
<dbReference type="GO" id="GO:1990904">
    <property type="term" value="C:ribonucleoprotein complex"/>
    <property type="evidence" value="ECO:0007669"/>
    <property type="project" value="UniProtKB-KW"/>
</dbReference>
<dbReference type="GO" id="GO:0005840">
    <property type="term" value="C:ribosome"/>
    <property type="evidence" value="ECO:0007669"/>
    <property type="project" value="UniProtKB-KW"/>
</dbReference>
<dbReference type="GO" id="GO:0019843">
    <property type="term" value="F:rRNA binding"/>
    <property type="evidence" value="ECO:0007669"/>
    <property type="project" value="UniProtKB-UniRule"/>
</dbReference>
<dbReference type="GO" id="GO:0003735">
    <property type="term" value="F:structural constituent of ribosome"/>
    <property type="evidence" value="ECO:0007669"/>
    <property type="project" value="InterPro"/>
</dbReference>
<dbReference type="GO" id="GO:0006412">
    <property type="term" value="P:translation"/>
    <property type="evidence" value="ECO:0007669"/>
    <property type="project" value="UniProtKB-UniRule"/>
</dbReference>
<dbReference type="HAMAP" id="MF_01363">
    <property type="entry name" value="Ribosomal_bL21"/>
    <property type="match status" value="1"/>
</dbReference>
<dbReference type="InterPro" id="IPR028909">
    <property type="entry name" value="bL21-like"/>
</dbReference>
<dbReference type="InterPro" id="IPR036164">
    <property type="entry name" value="bL21-like_sf"/>
</dbReference>
<dbReference type="InterPro" id="IPR001787">
    <property type="entry name" value="Ribosomal_bL21"/>
</dbReference>
<dbReference type="InterPro" id="IPR018258">
    <property type="entry name" value="Ribosomal_bL21_CS"/>
</dbReference>
<dbReference type="NCBIfam" id="TIGR00061">
    <property type="entry name" value="L21"/>
    <property type="match status" value="1"/>
</dbReference>
<dbReference type="PANTHER" id="PTHR21349">
    <property type="entry name" value="50S RIBOSOMAL PROTEIN L21"/>
    <property type="match status" value="1"/>
</dbReference>
<dbReference type="PANTHER" id="PTHR21349:SF0">
    <property type="entry name" value="LARGE RIBOSOMAL SUBUNIT PROTEIN BL21M"/>
    <property type="match status" value="1"/>
</dbReference>
<dbReference type="Pfam" id="PF00829">
    <property type="entry name" value="Ribosomal_L21p"/>
    <property type="match status" value="1"/>
</dbReference>
<dbReference type="SUPFAM" id="SSF141091">
    <property type="entry name" value="L21p-like"/>
    <property type="match status" value="1"/>
</dbReference>
<dbReference type="PROSITE" id="PS01169">
    <property type="entry name" value="RIBOSOMAL_L21"/>
    <property type="match status" value="1"/>
</dbReference>
<keyword id="KW-1185">Reference proteome</keyword>
<keyword id="KW-0687">Ribonucleoprotein</keyword>
<keyword id="KW-0689">Ribosomal protein</keyword>
<keyword id="KW-0694">RNA-binding</keyword>
<keyword id="KW-0699">rRNA-binding</keyword>
<comment type="function">
    <text evidence="1">This protein binds to 23S rRNA in the presence of protein L20.</text>
</comment>
<comment type="subunit">
    <text evidence="1">Part of the 50S ribosomal subunit. Contacts protein L20.</text>
</comment>
<comment type="similarity">
    <text evidence="1">Belongs to the bacterial ribosomal protein bL21 family.</text>
</comment>
<name>RL21_IDILO</name>
<evidence type="ECO:0000255" key="1">
    <source>
        <dbReference type="HAMAP-Rule" id="MF_01363"/>
    </source>
</evidence>
<evidence type="ECO:0000305" key="2"/>
<organism>
    <name type="scientific">Idiomarina loihiensis (strain ATCC BAA-735 / DSM 15497 / L2-TR)</name>
    <dbReference type="NCBI Taxonomy" id="283942"/>
    <lineage>
        <taxon>Bacteria</taxon>
        <taxon>Pseudomonadati</taxon>
        <taxon>Pseudomonadota</taxon>
        <taxon>Gammaproteobacteria</taxon>
        <taxon>Alteromonadales</taxon>
        <taxon>Idiomarinaceae</taxon>
        <taxon>Idiomarina</taxon>
    </lineage>
</organism>
<protein>
    <recommendedName>
        <fullName evidence="1">Large ribosomal subunit protein bL21</fullName>
    </recommendedName>
    <alternativeName>
        <fullName evidence="2">50S ribosomal protein L21</fullName>
    </alternativeName>
</protein>